<accession>P0C5Y6</accession>
<proteinExistence type="inferred from homology"/>
<name>YCIZ_SALTY</name>
<organism>
    <name type="scientific">Salmonella typhimurium (strain LT2 / SGSC1412 / ATCC 700720)</name>
    <dbReference type="NCBI Taxonomy" id="99287"/>
    <lineage>
        <taxon>Bacteria</taxon>
        <taxon>Pseudomonadati</taxon>
        <taxon>Pseudomonadota</taxon>
        <taxon>Gammaproteobacteria</taxon>
        <taxon>Enterobacterales</taxon>
        <taxon>Enterobacteriaceae</taxon>
        <taxon>Salmonella</taxon>
    </lineage>
</organism>
<gene>
    <name type="primary">yciZ</name>
    <name type="ordered locus">STM1703.1</name>
</gene>
<feature type="chain" id="PRO_0000312526" description="UPF0509 protein YciZ">
    <location>
        <begin position="1"/>
        <end position="59"/>
    </location>
</feature>
<dbReference type="EMBL" id="AE006468">
    <property type="status" value="NOT_ANNOTATED_CDS"/>
    <property type="molecule type" value="Genomic_DNA"/>
</dbReference>
<dbReference type="PhylomeDB" id="P0C5Y6"/>
<dbReference type="Proteomes" id="UP000001014">
    <property type="component" value="Chromosome"/>
</dbReference>
<dbReference type="HAMAP" id="MF_01641">
    <property type="entry name" value="UPF0509"/>
    <property type="match status" value="1"/>
</dbReference>
<dbReference type="InterPro" id="IPR020887">
    <property type="entry name" value="UPF0509"/>
</dbReference>
<dbReference type="NCBIfam" id="NF010179">
    <property type="entry name" value="PRK13658.1"/>
    <property type="match status" value="1"/>
</dbReference>
<dbReference type="Pfam" id="PF23675">
    <property type="entry name" value="YciZ"/>
    <property type="match status" value="1"/>
</dbReference>
<keyword id="KW-1185">Reference proteome</keyword>
<evidence type="ECO:0000305" key="1"/>
<reference key="1">
    <citation type="journal article" date="2001" name="Nature">
        <title>Complete genome sequence of Salmonella enterica serovar Typhimurium LT2.</title>
        <authorList>
            <person name="McClelland M."/>
            <person name="Sanderson K.E."/>
            <person name="Spieth J."/>
            <person name="Clifton S.W."/>
            <person name="Latreille P."/>
            <person name="Courtney L."/>
            <person name="Porwollik S."/>
            <person name="Ali J."/>
            <person name="Dante M."/>
            <person name="Du F."/>
            <person name="Hou S."/>
            <person name="Layman D."/>
            <person name="Leonard S."/>
            <person name="Nguyen C."/>
            <person name="Scott K."/>
            <person name="Holmes A."/>
            <person name="Grewal N."/>
            <person name="Mulvaney E."/>
            <person name="Ryan E."/>
            <person name="Sun H."/>
            <person name="Florea L."/>
            <person name="Miller W."/>
            <person name="Stoneking T."/>
            <person name="Nhan M."/>
            <person name="Waterston R."/>
            <person name="Wilson R.K."/>
        </authorList>
    </citation>
    <scope>NUCLEOTIDE SEQUENCE [LARGE SCALE GENOMIC DNA]</scope>
    <source>
        <strain>LT2 / SGSC1412 / ATCC 700720</strain>
    </source>
</reference>
<comment type="similarity">
    <text evidence="1">Belongs to the UPF0509 family.</text>
</comment>
<protein>
    <recommendedName>
        <fullName>UPF0509 protein YciZ</fullName>
    </recommendedName>
</protein>
<sequence>MSDIEAQRIAARIDTVLDILVAGDYHSAINNLEILRAELLDQVKDGISPSQAPGSPWEI</sequence>